<sequence>MAKDEVGHNFLARLGKTRLRPGGKKATDWLIANGGFSQDKKVLEVACNMGTTAIGLAKQFGCHIEGVDLDENALAKAQANIEANGLQEKIHVQRANAMKLPFEDESFDIVINEAMLTMLPVEAKKKAIAEYFRVLKPNGLLLTHDVMLVGNDHQTILENMRKAINVTVTPLTKDGWKGIFQESGFRNVDTFSGEMTLLSPKGMIYDEGIFGTLKIIRNAMKAENREQFKRMFKTFNDPEHKLHFIAVCSQK</sequence>
<proteinExistence type="predicted"/>
<accession>Q57060</accession>
<accession>O05007</accession>
<keyword id="KW-0489">Methyltransferase</keyword>
<keyword id="KW-1185">Reference proteome</keyword>
<keyword id="KW-0808">Transferase</keyword>
<name>Y095_HAEIN</name>
<feature type="chain" id="PRO_0000077886" description="Uncharacterized protein HI_0095">
    <location>
        <begin position="1"/>
        <end position="251"/>
    </location>
</feature>
<protein>
    <recommendedName>
        <fullName>Uncharacterized protein HI_0095</fullName>
    </recommendedName>
</protein>
<dbReference type="EMBL" id="L42023">
    <property type="protein sequence ID" value="AAC21772.1"/>
    <property type="molecule type" value="Genomic_DNA"/>
</dbReference>
<dbReference type="PIR" id="B64048">
    <property type="entry name" value="B64048"/>
</dbReference>
<dbReference type="RefSeq" id="NP_438269.1">
    <property type="nucleotide sequence ID" value="NC_000907.1"/>
</dbReference>
<dbReference type="SMR" id="Q57060"/>
<dbReference type="STRING" id="71421.HI_0095"/>
<dbReference type="DNASU" id="950997"/>
<dbReference type="EnsemblBacteria" id="AAC21772">
    <property type="protein sequence ID" value="AAC21772"/>
    <property type="gene ID" value="HI_0095"/>
</dbReference>
<dbReference type="KEGG" id="hin:HI_0095"/>
<dbReference type="PATRIC" id="fig|71421.8.peg.97"/>
<dbReference type="eggNOG" id="COG2226">
    <property type="taxonomic scope" value="Bacteria"/>
</dbReference>
<dbReference type="HOGENOM" id="CLU_039068_4_1_6"/>
<dbReference type="OrthoDB" id="529208at2"/>
<dbReference type="PhylomeDB" id="Q57060"/>
<dbReference type="BioCyc" id="HINF71421:G1GJ1-100-MONOMER"/>
<dbReference type="Proteomes" id="UP000000579">
    <property type="component" value="Chromosome"/>
</dbReference>
<dbReference type="GO" id="GO:0008168">
    <property type="term" value="F:methyltransferase activity"/>
    <property type="evidence" value="ECO:0007669"/>
    <property type="project" value="UniProtKB-KW"/>
</dbReference>
<dbReference type="GO" id="GO:0032259">
    <property type="term" value="P:methylation"/>
    <property type="evidence" value="ECO:0007669"/>
    <property type="project" value="UniProtKB-KW"/>
</dbReference>
<dbReference type="CDD" id="cd02440">
    <property type="entry name" value="AdoMet_MTases"/>
    <property type="match status" value="1"/>
</dbReference>
<dbReference type="Gene3D" id="3.40.50.150">
    <property type="entry name" value="Vaccinia Virus protein VP39"/>
    <property type="match status" value="1"/>
</dbReference>
<dbReference type="InterPro" id="IPR050447">
    <property type="entry name" value="Erg6_SMT_methyltransf"/>
</dbReference>
<dbReference type="InterPro" id="IPR041698">
    <property type="entry name" value="Methyltransf_25"/>
</dbReference>
<dbReference type="InterPro" id="IPR029063">
    <property type="entry name" value="SAM-dependent_MTases_sf"/>
</dbReference>
<dbReference type="PANTHER" id="PTHR44068:SF11">
    <property type="entry name" value="GERANYL DIPHOSPHATE 2-C-METHYLTRANSFERASE"/>
    <property type="match status" value="1"/>
</dbReference>
<dbReference type="PANTHER" id="PTHR44068">
    <property type="entry name" value="ZGC:194242"/>
    <property type="match status" value="1"/>
</dbReference>
<dbReference type="Pfam" id="PF13649">
    <property type="entry name" value="Methyltransf_25"/>
    <property type="match status" value="1"/>
</dbReference>
<dbReference type="SUPFAM" id="SSF53335">
    <property type="entry name" value="S-adenosyl-L-methionine-dependent methyltransferases"/>
    <property type="match status" value="1"/>
</dbReference>
<gene>
    <name type="ordered locus">HI_0095</name>
</gene>
<organism>
    <name type="scientific">Haemophilus influenzae (strain ATCC 51907 / DSM 11121 / KW20 / Rd)</name>
    <dbReference type="NCBI Taxonomy" id="71421"/>
    <lineage>
        <taxon>Bacteria</taxon>
        <taxon>Pseudomonadati</taxon>
        <taxon>Pseudomonadota</taxon>
        <taxon>Gammaproteobacteria</taxon>
        <taxon>Pasteurellales</taxon>
        <taxon>Pasteurellaceae</taxon>
        <taxon>Haemophilus</taxon>
    </lineage>
</organism>
<reference key="1">
    <citation type="journal article" date="1995" name="Science">
        <title>Whole-genome random sequencing and assembly of Haemophilus influenzae Rd.</title>
        <authorList>
            <person name="Fleischmann R.D."/>
            <person name="Adams M.D."/>
            <person name="White O."/>
            <person name="Clayton R.A."/>
            <person name="Kirkness E.F."/>
            <person name="Kerlavage A.R."/>
            <person name="Bult C.J."/>
            <person name="Tomb J.-F."/>
            <person name="Dougherty B.A."/>
            <person name="Merrick J.M."/>
            <person name="McKenney K."/>
            <person name="Sutton G.G."/>
            <person name="FitzHugh W."/>
            <person name="Fields C.A."/>
            <person name="Gocayne J.D."/>
            <person name="Scott J.D."/>
            <person name="Shirley R."/>
            <person name="Liu L.-I."/>
            <person name="Glodek A."/>
            <person name="Kelley J.M."/>
            <person name="Weidman J.F."/>
            <person name="Phillips C.A."/>
            <person name="Spriggs T."/>
            <person name="Hedblom E."/>
            <person name="Cotton M.D."/>
            <person name="Utterback T.R."/>
            <person name="Hanna M.C."/>
            <person name="Nguyen D.T."/>
            <person name="Saudek D.M."/>
            <person name="Brandon R.C."/>
            <person name="Fine L.D."/>
            <person name="Fritchman J.L."/>
            <person name="Fuhrmann J.L."/>
            <person name="Geoghagen N.S.M."/>
            <person name="Gnehm C.L."/>
            <person name="McDonald L.A."/>
            <person name="Small K.V."/>
            <person name="Fraser C.M."/>
            <person name="Smith H.O."/>
            <person name="Venter J.C."/>
        </authorList>
    </citation>
    <scope>NUCLEOTIDE SEQUENCE [LARGE SCALE GENOMIC DNA]</scope>
    <source>
        <strain>ATCC 51907 / DSM 11121 / KW20 / Rd</strain>
    </source>
</reference>